<gene>
    <name type="primary">coaA</name>
    <name type="ordered locus">SPy_1233</name>
    <name type="ordered locus">M5005_Spy0945</name>
</gene>
<name>COAA_STRP1</name>
<protein>
    <recommendedName>
        <fullName>Pantothenate kinase</fullName>
        <ecNumber>2.7.1.33</ecNumber>
    </recommendedName>
    <alternativeName>
        <fullName>Pantothenic acid kinase</fullName>
    </alternativeName>
</protein>
<organism>
    <name type="scientific">Streptococcus pyogenes serotype M1</name>
    <dbReference type="NCBI Taxonomy" id="301447"/>
    <lineage>
        <taxon>Bacteria</taxon>
        <taxon>Bacillati</taxon>
        <taxon>Bacillota</taxon>
        <taxon>Bacilli</taxon>
        <taxon>Lactobacillales</taxon>
        <taxon>Streptococcaceae</taxon>
        <taxon>Streptococcus</taxon>
    </lineage>
</organism>
<feature type="chain" id="PRO_0000194456" description="Pantothenate kinase">
    <location>
        <begin position="1"/>
        <end position="306"/>
    </location>
</feature>
<feature type="binding site" evidence="2">
    <location>
        <begin position="91"/>
        <end position="98"/>
    </location>
    <ligand>
        <name>ATP</name>
        <dbReference type="ChEBI" id="CHEBI:30616"/>
    </ligand>
</feature>
<keyword id="KW-0067">ATP-binding</keyword>
<keyword id="KW-0173">Coenzyme A biosynthesis</keyword>
<keyword id="KW-0963">Cytoplasm</keyword>
<keyword id="KW-0418">Kinase</keyword>
<keyword id="KW-0547">Nucleotide-binding</keyword>
<keyword id="KW-1185">Reference proteome</keyword>
<keyword id="KW-0808">Transferase</keyword>
<evidence type="ECO:0000250" key="1"/>
<evidence type="ECO:0000255" key="2"/>
<evidence type="ECO:0000305" key="3"/>
<sequence>MSNEFINFEKISRESWKTLHQKAKALLTQEELKSITSLNDNISINDVIDIYLPLINLIQVYKIAQENLSFSKSLFLKKDIQLRPFIIGISGSVAVGKSTTSRLLQLLLSRTHPNSQVELVTTDGFLYPNQFLIEQGLLNRKGFPESYNMELLLDFLDSIKNGQTAFAPVYSHDIYDIIPNQKQSFNNPDFLIVEGINVFQNQQNNRLYMSDYFDFSIYIDADSSHIETWYIERFLSILKLAKRDPHNYYAQYAQLPRSEAIAFARNVWKTVNLENLEKFIEPTRNRAELILHKSADHKIDEIYLKK</sequence>
<proteinExistence type="inferred from homology"/>
<reference key="1">
    <citation type="journal article" date="2001" name="Proc. Natl. Acad. Sci. U.S.A.">
        <title>Complete genome sequence of an M1 strain of Streptococcus pyogenes.</title>
        <authorList>
            <person name="Ferretti J.J."/>
            <person name="McShan W.M."/>
            <person name="Ajdic D.J."/>
            <person name="Savic D.J."/>
            <person name="Savic G."/>
            <person name="Lyon K."/>
            <person name="Primeaux C."/>
            <person name="Sezate S."/>
            <person name="Suvorov A.N."/>
            <person name="Kenton S."/>
            <person name="Lai H.S."/>
            <person name="Lin S.P."/>
            <person name="Qian Y."/>
            <person name="Jia H.G."/>
            <person name="Najar F.Z."/>
            <person name="Ren Q."/>
            <person name="Zhu H."/>
            <person name="Song L."/>
            <person name="White J."/>
            <person name="Yuan X."/>
            <person name="Clifton S.W."/>
            <person name="Roe B.A."/>
            <person name="McLaughlin R.E."/>
        </authorList>
    </citation>
    <scope>NUCLEOTIDE SEQUENCE [LARGE SCALE GENOMIC DNA]</scope>
    <source>
        <strain>ATCC 700294 / SF370 / Serotype M1</strain>
    </source>
</reference>
<reference key="2">
    <citation type="journal article" date="2005" name="J. Infect. Dis.">
        <title>Evolutionary origin and emergence of a highly successful clone of serotype M1 group A Streptococcus involved multiple horizontal gene transfer events.</title>
        <authorList>
            <person name="Sumby P."/>
            <person name="Porcella S.F."/>
            <person name="Madrigal A.G."/>
            <person name="Barbian K.D."/>
            <person name="Virtaneva K."/>
            <person name="Ricklefs S.M."/>
            <person name="Sturdevant D.E."/>
            <person name="Graham M.R."/>
            <person name="Vuopio-Varkila J."/>
            <person name="Hoe N.P."/>
            <person name="Musser J.M."/>
        </authorList>
    </citation>
    <scope>NUCLEOTIDE SEQUENCE [LARGE SCALE GENOMIC DNA]</scope>
    <source>
        <strain>ATCC BAA-947 / MGAS5005 / Serotype M1</strain>
    </source>
</reference>
<accession>Q99ZH1</accession>
<accession>Q48YK9</accession>
<dbReference type="EC" id="2.7.1.33"/>
<dbReference type="EMBL" id="AE004092">
    <property type="protein sequence ID" value="AAK34090.1"/>
    <property type="molecule type" value="Genomic_DNA"/>
</dbReference>
<dbReference type="EMBL" id="CP000017">
    <property type="protein sequence ID" value="AAZ51563.1"/>
    <property type="molecule type" value="Genomic_DNA"/>
</dbReference>
<dbReference type="RefSeq" id="NP_269369.1">
    <property type="nucleotide sequence ID" value="NC_002737.2"/>
</dbReference>
<dbReference type="SMR" id="Q99ZH1"/>
<dbReference type="PaxDb" id="1314-HKU360_00990"/>
<dbReference type="KEGG" id="spy:SPy_1233"/>
<dbReference type="KEGG" id="spz:M5005_Spy0945"/>
<dbReference type="PATRIC" id="fig|160490.10.peg.1077"/>
<dbReference type="HOGENOM" id="CLU_053818_1_1_9"/>
<dbReference type="OMA" id="MQRKGFP"/>
<dbReference type="UniPathway" id="UPA00241">
    <property type="reaction ID" value="UER00352"/>
</dbReference>
<dbReference type="Proteomes" id="UP000000750">
    <property type="component" value="Chromosome"/>
</dbReference>
<dbReference type="GO" id="GO:0005737">
    <property type="term" value="C:cytoplasm"/>
    <property type="evidence" value="ECO:0007669"/>
    <property type="project" value="UniProtKB-SubCell"/>
</dbReference>
<dbReference type="GO" id="GO:0005524">
    <property type="term" value="F:ATP binding"/>
    <property type="evidence" value="ECO:0007669"/>
    <property type="project" value="UniProtKB-UniRule"/>
</dbReference>
<dbReference type="GO" id="GO:0004594">
    <property type="term" value="F:pantothenate kinase activity"/>
    <property type="evidence" value="ECO:0007669"/>
    <property type="project" value="UniProtKB-UniRule"/>
</dbReference>
<dbReference type="GO" id="GO:0015937">
    <property type="term" value="P:coenzyme A biosynthetic process"/>
    <property type="evidence" value="ECO:0007669"/>
    <property type="project" value="UniProtKB-UniRule"/>
</dbReference>
<dbReference type="CDD" id="cd02025">
    <property type="entry name" value="PanK"/>
    <property type="match status" value="1"/>
</dbReference>
<dbReference type="Gene3D" id="3.40.50.300">
    <property type="entry name" value="P-loop containing nucleotide triphosphate hydrolases"/>
    <property type="match status" value="1"/>
</dbReference>
<dbReference type="HAMAP" id="MF_00215">
    <property type="entry name" value="Pantothen_kinase_1"/>
    <property type="match status" value="1"/>
</dbReference>
<dbReference type="InterPro" id="IPR027417">
    <property type="entry name" value="P-loop_NTPase"/>
</dbReference>
<dbReference type="InterPro" id="IPR004566">
    <property type="entry name" value="PanK"/>
</dbReference>
<dbReference type="InterPro" id="IPR006083">
    <property type="entry name" value="PRK/URK"/>
</dbReference>
<dbReference type="NCBIfam" id="TIGR00554">
    <property type="entry name" value="panK_bact"/>
    <property type="match status" value="1"/>
</dbReference>
<dbReference type="PANTHER" id="PTHR10285">
    <property type="entry name" value="URIDINE KINASE"/>
    <property type="match status" value="1"/>
</dbReference>
<dbReference type="Pfam" id="PF00485">
    <property type="entry name" value="PRK"/>
    <property type="match status" value="1"/>
</dbReference>
<dbReference type="PIRSF" id="PIRSF000545">
    <property type="entry name" value="Pantothenate_kin"/>
    <property type="match status" value="1"/>
</dbReference>
<dbReference type="SUPFAM" id="SSF52540">
    <property type="entry name" value="P-loop containing nucleoside triphosphate hydrolases"/>
    <property type="match status" value="1"/>
</dbReference>
<comment type="catalytic activity">
    <reaction>
        <text>(R)-pantothenate + ATP = (R)-4'-phosphopantothenate + ADP + H(+)</text>
        <dbReference type="Rhea" id="RHEA:16373"/>
        <dbReference type="ChEBI" id="CHEBI:10986"/>
        <dbReference type="ChEBI" id="CHEBI:15378"/>
        <dbReference type="ChEBI" id="CHEBI:29032"/>
        <dbReference type="ChEBI" id="CHEBI:30616"/>
        <dbReference type="ChEBI" id="CHEBI:456216"/>
        <dbReference type="EC" id="2.7.1.33"/>
    </reaction>
</comment>
<comment type="pathway">
    <text>Cofactor biosynthesis; coenzyme A biosynthesis; CoA from (R)-pantothenate: step 1/5.</text>
</comment>
<comment type="subcellular location">
    <subcellularLocation>
        <location evidence="1">Cytoplasm</location>
    </subcellularLocation>
</comment>
<comment type="similarity">
    <text evidence="3">Belongs to the prokaryotic pantothenate kinase family.</text>
</comment>